<feature type="chain" id="PRO_0000345220" description="D-aminoacyl-tRNA deacylase">
    <location>
        <begin position="1"/>
        <end position="437"/>
    </location>
</feature>
<sequence>MRIALINSQQDVGGVNIKNHLQTLLAAGGRWPLAEQHELTFYEVAGRLIHQDRIDEEVDADLILFISRHASVHPTPALTVHVTGNYEGADLGGEPGRLAPAAPAWMHAILGNLAARAPEGYRVSYEVTHHGPTALSTPSLFVEIGSTATEWADPAAGRAVAESILAAEPQETIDLLGFGGTHYAVRQTEIALSSRGAFGHMVPTRQIGAVDPVLLRTMQEASGAVAGYIDRKSLTKDDAGRIERMLGDAALPLLSESEIQEASGLAWAAYLRVRELAEEIAPGSRVRIHDLRGEGTPAVVRIGPGLIEETIKSDRSGFLKGLDELPVAHLSKGSNEVLSTFICFENESSRLASDITTLCVKLLLICENAVIDGDHLVLRKVRFDPEKARRHGIPKGPLFAMLAGGKAVEIEGRMVTPDAVQTTSVKRIHIPGLERYI</sequence>
<gene>
    <name evidence="1" type="primary">dtdA</name>
    <name type="ordered locus">Memar_0408</name>
</gene>
<name>DTDA_METMJ</name>
<keyword id="KW-0378">Hydrolase</keyword>
<keyword id="KW-0479">Metal-binding</keyword>
<keyword id="KW-0862">Zinc</keyword>
<evidence type="ECO:0000255" key="1">
    <source>
        <dbReference type="HAMAP-Rule" id="MF_00562"/>
    </source>
</evidence>
<evidence type="ECO:0000305" key="2"/>
<proteinExistence type="inferred from homology"/>
<accession>A3CSJ1</accession>
<dbReference type="EC" id="3.1.1.96" evidence="1"/>
<dbReference type="EMBL" id="CP000562">
    <property type="protein sequence ID" value="ABN56341.1"/>
    <property type="status" value="ALT_INIT"/>
    <property type="molecule type" value="Genomic_DNA"/>
</dbReference>
<dbReference type="SMR" id="A3CSJ1"/>
<dbReference type="STRING" id="368407.Memar_0408"/>
<dbReference type="KEGG" id="mem:Memar_0408"/>
<dbReference type="eggNOG" id="arCOG01616">
    <property type="taxonomic scope" value="Archaea"/>
</dbReference>
<dbReference type="HOGENOM" id="CLU_610619_0_0_2"/>
<dbReference type="OrthoDB" id="9863at2157"/>
<dbReference type="Proteomes" id="UP000002146">
    <property type="component" value="Chromosome"/>
</dbReference>
<dbReference type="GO" id="GO:0051499">
    <property type="term" value="F:D-aminoacyl-tRNA deacylase activity"/>
    <property type="evidence" value="ECO:0007669"/>
    <property type="project" value="UniProtKB-UniRule"/>
</dbReference>
<dbReference type="GO" id="GO:0008270">
    <property type="term" value="F:zinc ion binding"/>
    <property type="evidence" value="ECO:0007669"/>
    <property type="project" value="UniProtKB-UniRule"/>
</dbReference>
<dbReference type="GO" id="GO:0019478">
    <property type="term" value="P:D-amino acid catabolic process"/>
    <property type="evidence" value="ECO:0007669"/>
    <property type="project" value="UniProtKB-UniRule"/>
</dbReference>
<dbReference type="Gene3D" id="3.40.50.10700">
    <property type="entry name" value="AF0625-like"/>
    <property type="match status" value="1"/>
</dbReference>
<dbReference type="Gene3D" id="3.40.630.50">
    <property type="entry name" value="AF0625-like"/>
    <property type="match status" value="1"/>
</dbReference>
<dbReference type="HAMAP" id="MF_00562">
    <property type="entry name" value="Deacylase_DtdA"/>
    <property type="match status" value="1"/>
</dbReference>
<dbReference type="InterPro" id="IPR018033">
    <property type="entry name" value="Deacylase_DtdA_archaea"/>
</dbReference>
<dbReference type="InterPro" id="IPR007508">
    <property type="entry name" value="DtdA"/>
</dbReference>
<dbReference type="NCBIfam" id="NF011436">
    <property type="entry name" value="PRK14866.1-3"/>
    <property type="match status" value="1"/>
</dbReference>
<dbReference type="PANTHER" id="PTHR34667">
    <property type="entry name" value="D-AMINOACYL-TRNA DEACYLASE"/>
    <property type="match status" value="1"/>
</dbReference>
<dbReference type="PANTHER" id="PTHR34667:SF1">
    <property type="entry name" value="D-AMINOACYL-TRNA DEACYLASE"/>
    <property type="match status" value="1"/>
</dbReference>
<dbReference type="Pfam" id="PF04414">
    <property type="entry name" value="tRNA_deacylase"/>
    <property type="match status" value="1"/>
</dbReference>
<dbReference type="SUPFAM" id="SSF142535">
    <property type="entry name" value="AF0625-like"/>
    <property type="match status" value="1"/>
</dbReference>
<comment type="function">
    <text evidence="1">D-aminoacyl-tRNA deacylase with broad substrate specificity. By recycling D-aminoacyl-tRNA to D-amino acids and free tRNA molecules, this enzyme counteracts the toxicity associated with the formation of D-aminoacyl-tRNA entities in vivo.</text>
</comment>
<comment type="catalytic activity">
    <reaction evidence="1">
        <text>a D-aminoacyl-tRNA + H2O = a tRNA + a D-alpha-amino acid + H(+)</text>
        <dbReference type="Rhea" id="RHEA:13953"/>
        <dbReference type="Rhea" id="RHEA-COMP:10123"/>
        <dbReference type="Rhea" id="RHEA-COMP:10124"/>
        <dbReference type="ChEBI" id="CHEBI:15377"/>
        <dbReference type="ChEBI" id="CHEBI:15378"/>
        <dbReference type="ChEBI" id="CHEBI:59871"/>
        <dbReference type="ChEBI" id="CHEBI:78442"/>
        <dbReference type="ChEBI" id="CHEBI:79333"/>
        <dbReference type="EC" id="3.1.1.96"/>
    </reaction>
</comment>
<comment type="catalytic activity">
    <reaction evidence="1">
        <text>glycyl-tRNA(Ala) + H2O = tRNA(Ala) + glycine + H(+)</text>
        <dbReference type="Rhea" id="RHEA:53744"/>
        <dbReference type="Rhea" id="RHEA-COMP:9657"/>
        <dbReference type="Rhea" id="RHEA-COMP:13640"/>
        <dbReference type="ChEBI" id="CHEBI:15377"/>
        <dbReference type="ChEBI" id="CHEBI:15378"/>
        <dbReference type="ChEBI" id="CHEBI:57305"/>
        <dbReference type="ChEBI" id="CHEBI:78442"/>
        <dbReference type="ChEBI" id="CHEBI:78522"/>
        <dbReference type="EC" id="3.1.1.96"/>
    </reaction>
</comment>
<comment type="cofactor">
    <cofactor evidence="1">
        <name>Zn(2+)</name>
        <dbReference type="ChEBI" id="CHEBI:29105"/>
    </cofactor>
    <text evidence="1">Binds 2 Zn(2+) ions per subunit.</text>
</comment>
<comment type="subunit">
    <text evidence="1">Monomer.</text>
</comment>
<comment type="similarity">
    <text evidence="1">Belongs to the DtdA deacylase family.</text>
</comment>
<comment type="sequence caution" evidence="2">
    <conflict type="erroneous initiation">
        <sequence resource="EMBL-CDS" id="ABN56341"/>
    </conflict>
    <text>Extended N-terminus.</text>
</comment>
<protein>
    <recommendedName>
        <fullName evidence="1">D-aminoacyl-tRNA deacylase</fullName>
        <ecNumber evidence="1">3.1.1.96</ecNumber>
    </recommendedName>
    <alternativeName>
        <fullName>D-tyrosyl-tRNA(Tyr) deacylase</fullName>
    </alternativeName>
</protein>
<reference key="1">
    <citation type="journal article" date="2009" name="Stand. Genomic Sci.">
        <title>Complete genome sequence of Methanoculleus marisnigri Romesser et al. 1981 type strain JR1.</title>
        <authorList>
            <person name="Anderson I.J."/>
            <person name="Sieprawska-Lupa M."/>
            <person name="Lapidus A."/>
            <person name="Nolan M."/>
            <person name="Copeland A."/>
            <person name="Glavina Del Rio T."/>
            <person name="Tice H."/>
            <person name="Dalin E."/>
            <person name="Barry K."/>
            <person name="Saunders E."/>
            <person name="Han C."/>
            <person name="Brettin T."/>
            <person name="Detter J.C."/>
            <person name="Bruce D."/>
            <person name="Mikhailova N."/>
            <person name="Pitluck S."/>
            <person name="Hauser L."/>
            <person name="Land M."/>
            <person name="Lucas S."/>
            <person name="Richardson P."/>
            <person name="Whitman W.B."/>
            <person name="Kyrpides N.C."/>
        </authorList>
    </citation>
    <scope>NUCLEOTIDE SEQUENCE [LARGE SCALE GENOMIC DNA]</scope>
    <source>
        <strain>ATCC 35101 / DSM 1498 / JR1</strain>
    </source>
</reference>
<organism>
    <name type="scientific">Methanoculleus marisnigri (strain ATCC 35101 / DSM 1498 / JR1)</name>
    <dbReference type="NCBI Taxonomy" id="368407"/>
    <lineage>
        <taxon>Archaea</taxon>
        <taxon>Methanobacteriati</taxon>
        <taxon>Methanobacteriota</taxon>
        <taxon>Stenosarchaea group</taxon>
        <taxon>Methanomicrobia</taxon>
        <taxon>Methanomicrobiales</taxon>
        <taxon>Methanomicrobiaceae</taxon>
        <taxon>Methanoculleus</taxon>
    </lineage>
</organism>